<protein>
    <recommendedName>
        <fullName evidence="1">Tryptophan 2,3-dioxygenase</fullName>
        <shortName evidence="1">TDO</shortName>
        <ecNumber evidence="1">1.13.11.11</ecNumber>
    </recommendedName>
    <alternativeName>
        <fullName evidence="1">Tryptamin 2,3-dioxygenase</fullName>
    </alternativeName>
    <alternativeName>
        <fullName evidence="1">Tryptophan oxygenase</fullName>
        <shortName evidence="1">TO</shortName>
        <shortName evidence="1">TRPO</shortName>
    </alternativeName>
    <alternativeName>
        <fullName evidence="1">Tryptophan pyrrolase</fullName>
    </alternativeName>
    <alternativeName>
        <fullName evidence="1">Tryptophanase</fullName>
    </alternativeName>
</protein>
<organism>
    <name type="scientific">Burkholderia orbicola (strain MC0-3)</name>
    <dbReference type="NCBI Taxonomy" id="406425"/>
    <lineage>
        <taxon>Bacteria</taxon>
        <taxon>Pseudomonadati</taxon>
        <taxon>Pseudomonadota</taxon>
        <taxon>Betaproteobacteria</taxon>
        <taxon>Burkholderiales</taxon>
        <taxon>Burkholderiaceae</taxon>
        <taxon>Burkholderia</taxon>
        <taxon>Burkholderia cepacia complex</taxon>
        <taxon>Burkholderia orbicola</taxon>
    </lineage>
</organism>
<comment type="function">
    <text evidence="1">Heme-dependent dioxygenase that catalyzes the oxidative cleavage of the L-tryptophan (L-Trp) pyrrole ring and converts L-tryptophan to N-formyl-L-kynurenine. Catalyzes the oxidative cleavage of the indole moiety.</text>
</comment>
<comment type="catalytic activity">
    <reaction evidence="1">
        <text>L-tryptophan + O2 = N-formyl-L-kynurenine</text>
        <dbReference type="Rhea" id="RHEA:24536"/>
        <dbReference type="ChEBI" id="CHEBI:15379"/>
        <dbReference type="ChEBI" id="CHEBI:57912"/>
        <dbReference type="ChEBI" id="CHEBI:58629"/>
        <dbReference type="EC" id="1.13.11.11"/>
    </reaction>
</comment>
<comment type="cofactor">
    <cofactor evidence="1">
        <name>heme</name>
        <dbReference type="ChEBI" id="CHEBI:30413"/>
    </cofactor>
    <text evidence="1">Binds 1 heme group per subunit.</text>
</comment>
<comment type="pathway">
    <text evidence="1">Amino-acid degradation; L-tryptophan degradation via kynurenine pathway; L-kynurenine from L-tryptophan: step 1/2.</text>
</comment>
<comment type="subunit">
    <text evidence="1">Homotetramer.</text>
</comment>
<comment type="similarity">
    <text evidence="1">Belongs to the tryptophan 2,3-dioxygenase family.</text>
</comment>
<comment type="sequence caution" evidence="3">
    <conflict type="erroneous initiation">
        <sequence resource="EMBL-CDS" id="ACA91764"/>
    </conflict>
</comment>
<gene>
    <name evidence="1" type="primary">kynA</name>
    <name type="ordered locus">Bcenmc03_2603</name>
</gene>
<accession>B1JXI9</accession>
<evidence type="ECO:0000255" key="1">
    <source>
        <dbReference type="HAMAP-Rule" id="MF_01972"/>
    </source>
</evidence>
<evidence type="ECO:0000256" key="2">
    <source>
        <dbReference type="SAM" id="MobiDB-lite"/>
    </source>
</evidence>
<evidence type="ECO:0000305" key="3"/>
<proteinExistence type="inferred from homology"/>
<dbReference type="EC" id="1.13.11.11" evidence="1"/>
<dbReference type="EMBL" id="CP000958">
    <property type="protein sequence ID" value="ACA91764.1"/>
    <property type="status" value="ALT_INIT"/>
    <property type="molecule type" value="Genomic_DNA"/>
</dbReference>
<dbReference type="RefSeq" id="WP_034201423.1">
    <property type="nucleotide sequence ID" value="NC_010508.1"/>
</dbReference>
<dbReference type="SMR" id="B1JXI9"/>
<dbReference type="GeneID" id="83049390"/>
<dbReference type="KEGG" id="bcm:Bcenmc03_2603"/>
<dbReference type="HOGENOM" id="CLU_063240_0_0_4"/>
<dbReference type="UniPathway" id="UPA00333">
    <property type="reaction ID" value="UER00453"/>
</dbReference>
<dbReference type="Proteomes" id="UP000002169">
    <property type="component" value="Chromosome 1"/>
</dbReference>
<dbReference type="GO" id="GO:0020037">
    <property type="term" value="F:heme binding"/>
    <property type="evidence" value="ECO:0000250"/>
    <property type="project" value="UniProtKB"/>
</dbReference>
<dbReference type="GO" id="GO:0046872">
    <property type="term" value="F:metal ion binding"/>
    <property type="evidence" value="ECO:0007669"/>
    <property type="project" value="UniProtKB-KW"/>
</dbReference>
<dbReference type="GO" id="GO:0004833">
    <property type="term" value="F:tryptophan 2,3-dioxygenase activity"/>
    <property type="evidence" value="ECO:0000250"/>
    <property type="project" value="UniProtKB"/>
</dbReference>
<dbReference type="GO" id="GO:0019442">
    <property type="term" value="P:L-tryptophan catabolic process to acetyl-CoA"/>
    <property type="evidence" value="ECO:0007669"/>
    <property type="project" value="TreeGrafter"/>
</dbReference>
<dbReference type="GO" id="GO:0019441">
    <property type="term" value="P:L-tryptophan catabolic process to kynurenine"/>
    <property type="evidence" value="ECO:0000250"/>
    <property type="project" value="UniProtKB"/>
</dbReference>
<dbReference type="FunFam" id="1.20.58.480:FF:000001">
    <property type="entry name" value="Tryptophan 2,3-dioxygenase"/>
    <property type="match status" value="1"/>
</dbReference>
<dbReference type="Gene3D" id="1.20.58.480">
    <property type="match status" value="1"/>
</dbReference>
<dbReference type="HAMAP" id="MF_01972">
    <property type="entry name" value="T23O"/>
    <property type="match status" value="1"/>
</dbReference>
<dbReference type="InterPro" id="IPR037217">
    <property type="entry name" value="Trp/Indoleamine_2_3_dOase-like"/>
</dbReference>
<dbReference type="InterPro" id="IPR017485">
    <property type="entry name" value="Trp_2-3-dOase_bac"/>
</dbReference>
<dbReference type="InterPro" id="IPR004981">
    <property type="entry name" value="Trp_2_3_dOase"/>
</dbReference>
<dbReference type="NCBIfam" id="TIGR03036">
    <property type="entry name" value="trp_2_3_diox"/>
    <property type="match status" value="1"/>
</dbReference>
<dbReference type="PANTHER" id="PTHR10138">
    <property type="entry name" value="TRYPTOPHAN 2,3-DIOXYGENASE"/>
    <property type="match status" value="1"/>
</dbReference>
<dbReference type="PANTHER" id="PTHR10138:SF0">
    <property type="entry name" value="TRYPTOPHAN 2,3-DIOXYGENASE"/>
    <property type="match status" value="1"/>
</dbReference>
<dbReference type="Pfam" id="PF03301">
    <property type="entry name" value="Trp_dioxygenase"/>
    <property type="match status" value="1"/>
</dbReference>
<dbReference type="SUPFAM" id="SSF140959">
    <property type="entry name" value="Indolic compounds 2,3-dioxygenase-like"/>
    <property type="match status" value="1"/>
</dbReference>
<reference key="1">
    <citation type="submission" date="2008-02" db="EMBL/GenBank/DDBJ databases">
        <title>Complete sequence of chromosome 1 of Burkholderia cenocepacia MC0-3.</title>
        <authorList>
            <person name="Copeland A."/>
            <person name="Lucas S."/>
            <person name="Lapidus A."/>
            <person name="Barry K."/>
            <person name="Bruce D."/>
            <person name="Goodwin L."/>
            <person name="Glavina del Rio T."/>
            <person name="Dalin E."/>
            <person name="Tice H."/>
            <person name="Pitluck S."/>
            <person name="Chain P."/>
            <person name="Malfatti S."/>
            <person name="Shin M."/>
            <person name="Vergez L."/>
            <person name="Schmutz J."/>
            <person name="Larimer F."/>
            <person name="Land M."/>
            <person name="Hauser L."/>
            <person name="Kyrpides N."/>
            <person name="Mikhailova N."/>
            <person name="Tiedje J."/>
            <person name="Richardson P."/>
        </authorList>
    </citation>
    <scope>NUCLEOTIDE SEQUENCE [LARGE SCALE GENOMIC DNA]</scope>
    <source>
        <strain>MC0-3</strain>
    </source>
</reference>
<feature type="chain" id="PRO_0000360098" description="Tryptophan 2,3-dioxygenase">
    <location>
        <begin position="1"/>
        <end position="311"/>
    </location>
</feature>
<feature type="region of interest" description="Disordered" evidence="2">
    <location>
        <begin position="1"/>
        <end position="37"/>
    </location>
</feature>
<feature type="compositionally biased region" description="Low complexity" evidence="2">
    <location>
        <begin position="17"/>
        <end position="27"/>
    </location>
</feature>
<feature type="binding site" evidence="1">
    <location>
        <begin position="80"/>
        <end position="84"/>
    </location>
    <ligand>
        <name>substrate</name>
    </ligand>
</feature>
<feature type="binding site" evidence="1">
    <location>
        <position position="142"/>
    </location>
    <ligand>
        <name>substrate</name>
    </ligand>
</feature>
<feature type="binding site" evidence="1">
    <location>
        <position position="146"/>
    </location>
    <ligand>
        <name>substrate</name>
    </ligand>
</feature>
<feature type="binding site" description="axial binding residue" evidence="1">
    <location>
        <position position="269"/>
    </location>
    <ligand>
        <name>heme</name>
        <dbReference type="ChEBI" id="CHEBI:30413"/>
    </ligand>
    <ligandPart>
        <name>Fe</name>
        <dbReference type="ChEBI" id="CHEBI:18248"/>
    </ligandPart>
</feature>
<feature type="binding site" evidence="1">
    <location>
        <position position="283"/>
    </location>
    <ligand>
        <name>substrate</name>
    </ligand>
</feature>
<name>T23O_BURO0</name>
<sequence length="311" mass="35429">MQPPGGDAPAGCPFSGARAAQPAQAAHEAPHVPGEADAQAGWHNAQLDFSKSMSYGDYLSLNSILDAQHPLSPDHNEMLFIIQHQTSELWMKLALFELRGALDAVRTDALPPAFKMLARVSRILEQLVQAWNVLSTMTPSEYSAMRPYLGQSSGFQSYQYRQLEFLLGNKNAQMLQPHAHRPDILEQVRATLEAPSFYDEVVRLLARRGFPIAAERLERDWTQPTRHDETVEAAWLEVYRHPQQHWELYEMAEELVDLEDAFRQWRFRHVTTVERIIGFKQGTGGTSGAPYLRKMLDVVLFPELWHVRTTL</sequence>
<keyword id="KW-0223">Dioxygenase</keyword>
<keyword id="KW-0349">Heme</keyword>
<keyword id="KW-0408">Iron</keyword>
<keyword id="KW-0479">Metal-binding</keyword>
<keyword id="KW-0560">Oxidoreductase</keyword>
<keyword id="KW-0823">Tryptophan catabolism</keyword>